<feature type="chain" id="PRO_0000292974" description="Sulfite reductase [NADPH] flavoprotein alpha-component">
    <location>
        <begin position="1"/>
        <end position="599"/>
    </location>
</feature>
<feature type="domain" description="Flavodoxin-like" evidence="1">
    <location>
        <begin position="64"/>
        <end position="202"/>
    </location>
</feature>
<feature type="domain" description="FAD-binding FR-type" evidence="1">
    <location>
        <begin position="234"/>
        <end position="448"/>
    </location>
</feature>
<feature type="binding site" evidence="1">
    <location>
        <begin position="70"/>
        <end position="75"/>
    </location>
    <ligand>
        <name>FMN</name>
        <dbReference type="ChEBI" id="CHEBI:58210"/>
    </ligand>
</feature>
<feature type="binding site" evidence="1">
    <location>
        <begin position="117"/>
        <end position="120"/>
    </location>
    <ligand>
        <name>FMN</name>
        <dbReference type="ChEBI" id="CHEBI:58210"/>
    </ligand>
</feature>
<feature type="binding site" evidence="1">
    <location>
        <begin position="153"/>
        <end position="162"/>
    </location>
    <ligand>
        <name>FMN</name>
        <dbReference type="ChEBI" id="CHEBI:58210"/>
    </ligand>
</feature>
<feature type="binding site" evidence="1">
    <location>
        <position position="322"/>
    </location>
    <ligand>
        <name>FAD</name>
        <dbReference type="ChEBI" id="CHEBI:57692"/>
    </ligand>
</feature>
<feature type="binding site" evidence="1">
    <location>
        <position position="356"/>
    </location>
    <ligand>
        <name>FAD</name>
        <dbReference type="ChEBI" id="CHEBI:57692"/>
    </ligand>
</feature>
<feature type="binding site" evidence="1">
    <location>
        <begin position="386"/>
        <end position="389"/>
    </location>
    <ligand>
        <name>FAD</name>
        <dbReference type="ChEBI" id="CHEBI:57692"/>
    </ligand>
</feature>
<feature type="binding site" evidence="1">
    <location>
        <begin position="404"/>
        <end position="406"/>
    </location>
    <ligand>
        <name>FAD</name>
        <dbReference type="ChEBI" id="CHEBI:57692"/>
    </ligand>
</feature>
<feature type="binding site" evidence="1">
    <location>
        <position position="410"/>
    </location>
    <ligand>
        <name>FAD</name>
        <dbReference type="ChEBI" id="CHEBI:57692"/>
    </ligand>
</feature>
<feature type="binding site" evidence="1">
    <location>
        <begin position="419"/>
        <end position="422"/>
    </location>
    <ligand>
        <name>FAD</name>
        <dbReference type="ChEBI" id="CHEBI:57692"/>
    </ligand>
</feature>
<feature type="binding site" evidence="1">
    <location>
        <begin position="519"/>
        <end position="520"/>
    </location>
    <ligand>
        <name>NADP(+)</name>
        <dbReference type="ChEBI" id="CHEBI:58349"/>
    </ligand>
</feature>
<feature type="binding site" evidence="1">
    <location>
        <begin position="525"/>
        <end position="529"/>
    </location>
    <ligand>
        <name>NADP(+)</name>
        <dbReference type="ChEBI" id="CHEBI:58349"/>
    </ligand>
</feature>
<feature type="binding site" evidence="1">
    <location>
        <position position="561"/>
    </location>
    <ligand>
        <name>NADP(+)</name>
        <dbReference type="ChEBI" id="CHEBI:58349"/>
    </ligand>
</feature>
<feature type="binding site" evidence="1">
    <location>
        <position position="599"/>
    </location>
    <ligand>
        <name>FAD</name>
        <dbReference type="ChEBI" id="CHEBI:57692"/>
    </ligand>
</feature>
<gene>
    <name evidence="1" type="primary">cysJ</name>
    <name type="ordered locus">SDY_2966</name>
</gene>
<comment type="function">
    <text evidence="1">Component of the sulfite reductase complex that catalyzes the 6-electron reduction of sulfite to sulfide. This is one of several activities required for the biosynthesis of L-cysteine from sulfate. The flavoprotein component catalyzes the electron flow from NADPH -&gt; FAD -&gt; FMN to the hemoprotein component.</text>
</comment>
<comment type="catalytic activity">
    <reaction evidence="1">
        <text>hydrogen sulfide + 3 NADP(+) + 3 H2O = sulfite + 3 NADPH + 4 H(+)</text>
        <dbReference type="Rhea" id="RHEA:13801"/>
        <dbReference type="ChEBI" id="CHEBI:15377"/>
        <dbReference type="ChEBI" id="CHEBI:15378"/>
        <dbReference type="ChEBI" id="CHEBI:17359"/>
        <dbReference type="ChEBI" id="CHEBI:29919"/>
        <dbReference type="ChEBI" id="CHEBI:57783"/>
        <dbReference type="ChEBI" id="CHEBI:58349"/>
        <dbReference type="EC" id="1.8.1.2"/>
    </reaction>
</comment>
<comment type="cofactor">
    <cofactor evidence="1">
        <name>FAD</name>
        <dbReference type="ChEBI" id="CHEBI:57692"/>
    </cofactor>
    <text evidence="1">Binds 1 FAD per subunit.</text>
</comment>
<comment type="cofactor">
    <cofactor evidence="1">
        <name>FMN</name>
        <dbReference type="ChEBI" id="CHEBI:58210"/>
    </cofactor>
    <text evidence="1">Binds 1 FMN per subunit.</text>
</comment>
<comment type="pathway">
    <text evidence="1">Sulfur metabolism; hydrogen sulfide biosynthesis; hydrogen sulfide from sulfite (NADPH route): step 1/1.</text>
</comment>
<comment type="subunit">
    <text evidence="1">Alpha(8)-beta(8). The alpha component is a flavoprotein, the beta component is a hemoprotein.</text>
</comment>
<comment type="similarity">
    <text evidence="1">Belongs to the NADPH-dependent sulphite reductase flavoprotein subunit CysJ family.</text>
</comment>
<comment type="similarity">
    <text evidence="1">In the N-terminal section; belongs to the flavodoxin family.</text>
</comment>
<comment type="similarity">
    <text evidence="1">In the C-terminal section; belongs to the flavoprotein pyridine nucleotide cytochrome reductase family.</text>
</comment>
<name>CYSJ_SHIDS</name>
<reference key="1">
    <citation type="journal article" date="2005" name="Nucleic Acids Res.">
        <title>Genome dynamics and diversity of Shigella species, the etiologic agents of bacillary dysentery.</title>
        <authorList>
            <person name="Yang F."/>
            <person name="Yang J."/>
            <person name="Zhang X."/>
            <person name="Chen L."/>
            <person name="Jiang Y."/>
            <person name="Yan Y."/>
            <person name="Tang X."/>
            <person name="Wang J."/>
            <person name="Xiong Z."/>
            <person name="Dong J."/>
            <person name="Xue Y."/>
            <person name="Zhu Y."/>
            <person name="Xu X."/>
            <person name="Sun L."/>
            <person name="Chen S."/>
            <person name="Nie H."/>
            <person name="Peng J."/>
            <person name="Xu J."/>
            <person name="Wang Y."/>
            <person name="Yuan Z."/>
            <person name="Wen Y."/>
            <person name="Yao Z."/>
            <person name="Shen Y."/>
            <person name="Qiang B."/>
            <person name="Hou Y."/>
            <person name="Yu J."/>
            <person name="Jin Q."/>
        </authorList>
    </citation>
    <scope>NUCLEOTIDE SEQUENCE [LARGE SCALE GENOMIC DNA]</scope>
    <source>
        <strain>Sd197</strain>
    </source>
</reference>
<evidence type="ECO:0000255" key="1">
    <source>
        <dbReference type="HAMAP-Rule" id="MF_01541"/>
    </source>
</evidence>
<sequence>MTTQVPPSALLPLNPEQLARLQAATTDLTPTQLAWVSGYFWGVLNQQPAALAATPAPAAEMPGITIISASQTGNARRVAEALRDDLLTAKLNVKLVNAGDYKFKQIASEKLLIVVTSTQGEGEPPEEAVALHKFLFSKKAPKLENIAFAVFSLGDSSYEFFCQSGKDFDSKLAELGGERLLDRVDADVEYQTAASEWRARVVDALKSRAPVAAPSQSVATGAVNEIHTSPYSKDAPLVASLSVNQKITGRNSEKDVRHIEIDLGDSDLRYQPGDALGVWYQNDPALVTELVELLWLKGDEPVTVEGKTLPLNEALQWHFELTVNTANIVENYATLTRSETLLPLVGEKAKLQHYAATTPIVDMVRFSPAQLDAEALINLLRPLTPRLYSIASSQAEVENEVHVTVGVVRYDVEGRTRAGGASSFLADRVEEEGEVRVFIEHNDNFRLPANPETPVIMIGPGTGIAPFRAFMQQRAADEAPGKNWLFFGNPHFTEDFLYQVEWQRYVKEGVLTRIDLAWSRDQKEKVYVQDKLREQGAELWRWINDGAHIYVCGDANRMAKDVEQALLEVIAEFGGMDTEAADEFLSELRVERRYQRDVY</sequence>
<proteinExistence type="inferred from homology"/>
<keyword id="KW-0028">Amino-acid biosynthesis</keyword>
<keyword id="KW-0198">Cysteine biosynthesis</keyword>
<keyword id="KW-0249">Electron transport</keyword>
<keyword id="KW-0274">FAD</keyword>
<keyword id="KW-0285">Flavoprotein</keyword>
<keyword id="KW-0288">FMN</keyword>
<keyword id="KW-0521">NADP</keyword>
<keyword id="KW-0560">Oxidoreductase</keyword>
<keyword id="KW-1185">Reference proteome</keyword>
<keyword id="KW-0813">Transport</keyword>
<protein>
    <recommendedName>
        <fullName evidence="1">Sulfite reductase [NADPH] flavoprotein alpha-component</fullName>
        <shortName evidence="1">SiR-FP</shortName>
        <ecNumber evidence="1">1.8.1.2</ecNumber>
    </recommendedName>
</protein>
<accession>Q32CG3</accession>
<dbReference type="EC" id="1.8.1.2" evidence="1"/>
<dbReference type="EMBL" id="CP000034">
    <property type="protein sequence ID" value="ABB62992.1"/>
    <property type="molecule type" value="Genomic_DNA"/>
</dbReference>
<dbReference type="RefSeq" id="WP_000211931.1">
    <property type="nucleotide sequence ID" value="NC_007606.1"/>
</dbReference>
<dbReference type="RefSeq" id="YP_404483.1">
    <property type="nucleotide sequence ID" value="NC_007606.1"/>
</dbReference>
<dbReference type="SMR" id="Q32CG3"/>
<dbReference type="STRING" id="300267.SDY_2966"/>
<dbReference type="EnsemblBacteria" id="ABB62992">
    <property type="protein sequence ID" value="ABB62992"/>
    <property type="gene ID" value="SDY_2966"/>
</dbReference>
<dbReference type="KEGG" id="sdy:SDY_2966"/>
<dbReference type="PATRIC" id="fig|300267.13.peg.3558"/>
<dbReference type="HOGENOM" id="CLU_001570_17_7_6"/>
<dbReference type="UniPathway" id="UPA00140">
    <property type="reaction ID" value="UER00207"/>
</dbReference>
<dbReference type="Proteomes" id="UP000002716">
    <property type="component" value="Chromosome"/>
</dbReference>
<dbReference type="GO" id="GO:0005829">
    <property type="term" value="C:cytosol"/>
    <property type="evidence" value="ECO:0007669"/>
    <property type="project" value="TreeGrafter"/>
</dbReference>
<dbReference type="GO" id="GO:0050660">
    <property type="term" value="F:flavin adenine dinucleotide binding"/>
    <property type="evidence" value="ECO:0007669"/>
    <property type="project" value="InterPro"/>
</dbReference>
<dbReference type="GO" id="GO:0010181">
    <property type="term" value="F:FMN binding"/>
    <property type="evidence" value="ECO:0007669"/>
    <property type="project" value="InterPro"/>
</dbReference>
<dbReference type="GO" id="GO:0004783">
    <property type="term" value="F:sulfite reductase (NADPH) activity"/>
    <property type="evidence" value="ECO:0007669"/>
    <property type="project" value="UniProtKB-UniRule"/>
</dbReference>
<dbReference type="GO" id="GO:0019344">
    <property type="term" value="P:cysteine biosynthetic process"/>
    <property type="evidence" value="ECO:0007669"/>
    <property type="project" value="UniProtKB-KW"/>
</dbReference>
<dbReference type="GO" id="GO:0070814">
    <property type="term" value="P:hydrogen sulfide biosynthetic process"/>
    <property type="evidence" value="ECO:0007669"/>
    <property type="project" value="UniProtKB-UniRule"/>
</dbReference>
<dbReference type="GO" id="GO:0000103">
    <property type="term" value="P:sulfate assimilation"/>
    <property type="evidence" value="ECO:0007669"/>
    <property type="project" value="UniProtKB-UniRule"/>
</dbReference>
<dbReference type="CDD" id="cd06199">
    <property type="entry name" value="SiR"/>
    <property type="match status" value="1"/>
</dbReference>
<dbReference type="FunFam" id="3.40.50.80:FF:000001">
    <property type="entry name" value="NADPH--cytochrome P450 reductase 1"/>
    <property type="match status" value="1"/>
</dbReference>
<dbReference type="FunFam" id="1.20.990.10:FF:000004">
    <property type="entry name" value="Sulfite reductase [NADPH] flavoprotein alpha-component"/>
    <property type="match status" value="1"/>
</dbReference>
<dbReference type="FunFam" id="3.40.50.360:FF:000018">
    <property type="entry name" value="Sulfite reductase [NADPH] flavoprotein alpha-component"/>
    <property type="match status" value="1"/>
</dbReference>
<dbReference type="Gene3D" id="3.40.50.360">
    <property type="match status" value="1"/>
</dbReference>
<dbReference type="Gene3D" id="1.20.990.10">
    <property type="entry name" value="NADPH-cytochrome p450 Reductase, Chain A, domain 3"/>
    <property type="match status" value="1"/>
</dbReference>
<dbReference type="Gene3D" id="3.40.50.80">
    <property type="entry name" value="Nucleotide-binding domain of ferredoxin-NADP reductase (FNR) module"/>
    <property type="match status" value="1"/>
</dbReference>
<dbReference type="Gene3D" id="2.40.30.10">
    <property type="entry name" value="Translation factors"/>
    <property type="match status" value="1"/>
</dbReference>
<dbReference type="HAMAP" id="MF_01541">
    <property type="entry name" value="CysJ"/>
    <property type="match status" value="1"/>
</dbReference>
<dbReference type="InterPro" id="IPR010199">
    <property type="entry name" value="CysJ"/>
</dbReference>
<dbReference type="InterPro" id="IPR003097">
    <property type="entry name" value="CysJ-like_FAD-binding"/>
</dbReference>
<dbReference type="InterPro" id="IPR029758">
    <property type="entry name" value="CysJ_Proteobact"/>
</dbReference>
<dbReference type="InterPro" id="IPR017927">
    <property type="entry name" value="FAD-bd_FR_type"/>
</dbReference>
<dbReference type="InterPro" id="IPR001094">
    <property type="entry name" value="Flavdoxin-like"/>
</dbReference>
<dbReference type="InterPro" id="IPR008254">
    <property type="entry name" value="Flavodoxin/NO_synth"/>
</dbReference>
<dbReference type="InterPro" id="IPR001709">
    <property type="entry name" value="Flavoprot_Pyr_Nucl_cyt_Rdtase"/>
</dbReference>
<dbReference type="InterPro" id="IPR029039">
    <property type="entry name" value="Flavoprotein-like_sf"/>
</dbReference>
<dbReference type="InterPro" id="IPR039261">
    <property type="entry name" value="FNR_nucleotide-bd"/>
</dbReference>
<dbReference type="InterPro" id="IPR023173">
    <property type="entry name" value="NADPH_Cyt_P450_Rdtase_alpha"/>
</dbReference>
<dbReference type="InterPro" id="IPR001433">
    <property type="entry name" value="OxRdtase_FAD/NAD-bd"/>
</dbReference>
<dbReference type="InterPro" id="IPR017938">
    <property type="entry name" value="Riboflavin_synthase-like_b-brl"/>
</dbReference>
<dbReference type="NCBIfam" id="TIGR01931">
    <property type="entry name" value="cysJ"/>
    <property type="match status" value="1"/>
</dbReference>
<dbReference type="NCBIfam" id="NF004859">
    <property type="entry name" value="PRK06214.1"/>
    <property type="match status" value="1"/>
</dbReference>
<dbReference type="NCBIfam" id="NF008197">
    <property type="entry name" value="PRK10953.1"/>
    <property type="match status" value="1"/>
</dbReference>
<dbReference type="PANTHER" id="PTHR19384:SF128">
    <property type="entry name" value="NADPH OXIDOREDUCTASE A"/>
    <property type="match status" value="1"/>
</dbReference>
<dbReference type="PANTHER" id="PTHR19384">
    <property type="entry name" value="NITRIC OXIDE SYNTHASE-RELATED"/>
    <property type="match status" value="1"/>
</dbReference>
<dbReference type="Pfam" id="PF00667">
    <property type="entry name" value="FAD_binding_1"/>
    <property type="match status" value="1"/>
</dbReference>
<dbReference type="Pfam" id="PF00258">
    <property type="entry name" value="Flavodoxin_1"/>
    <property type="match status" value="1"/>
</dbReference>
<dbReference type="Pfam" id="PF00175">
    <property type="entry name" value="NAD_binding_1"/>
    <property type="match status" value="1"/>
</dbReference>
<dbReference type="PIRSF" id="PIRSF000207">
    <property type="entry name" value="SiR-FP_CysJ"/>
    <property type="match status" value="1"/>
</dbReference>
<dbReference type="PRINTS" id="PR00369">
    <property type="entry name" value="FLAVODOXIN"/>
</dbReference>
<dbReference type="PRINTS" id="PR00371">
    <property type="entry name" value="FPNCR"/>
</dbReference>
<dbReference type="SUPFAM" id="SSF52343">
    <property type="entry name" value="Ferredoxin reductase-like, C-terminal NADP-linked domain"/>
    <property type="match status" value="1"/>
</dbReference>
<dbReference type="SUPFAM" id="SSF52218">
    <property type="entry name" value="Flavoproteins"/>
    <property type="match status" value="1"/>
</dbReference>
<dbReference type="SUPFAM" id="SSF63380">
    <property type="entry name" value="Riboflavin synthase domain-like"/>
    <property type="match status" value="1"/>
</dbReference>
<dbReference type="PROSITE" id="PS51384">
    <property type="entry name" value="FAD_FR"/>
    <property type="match status" value="1"/>
</dbReference>
<dbReference type="PROSITE" id="PS50902">
    <property type="entry name" value="FLAVODOXIN_LIKE"/>
    <property type="match status" value="1"/>
</dbReference>
<organism>
    <name type="scientific">Shigella dysenteriae serotype 1 (strain Sd197)</name>
    <dbReference type="NCBI Taxonomy" id="300267"/>
    <lineage>
        <taxon>Bacteria</taxon>
        <taxon>Pseudomonadati</taxon>
        <taxon>Pseudomonadota</taxon>
        <taxon>Gammaproteobacteria</taxon>
        <taxon>Enterobacterales</taxon>
        <taxon>Enterobacteriaceae</taxon>
        <taxon>Shigella</taxon>
    </lineage>
</organism>